<geneLocation type="chloroplast"/>
<name>PSAC_CHAGL</name>
<feature type="initiator methionine" description="Removed" evidence="1">
    <location>
        <position position="1"/>
    </location>
</feature>
<feature type="chain" id="PRO_0000061973" description="Photosystem I iron-sulfur center">
    <location>
        <begin position="2"/>
        <end position="81"/>
    </location>
</feature>
<feature type="domain" description="4Fe-4S ferredoxin-type 1" evidence="2">
    <location>
        <begin position="2"/>
        <end position="31"/>
    </location>
</feature>
<feature type="domain" description="4Fe-4S ferredoxin-type 2" evidence="2">
    <location>
        <begin position="39"/>
        <end position="68"/>
    </location>
</feature>
<feature type="binding site" evidence="2">
    <location>
        <position position="11"/>
    </location>
    <ligand>
        <name>[4Fe-4S] cluster</name>
        <dbReference type="ChEBI" id="CHEBI:49883"/>
        <label>1</label>
    </ligand>
</feature>
<feature type="binding site" evidence="2">
    <location>
        <position position="14"/>
    </location>
    <ligand>
        <name>[4Fe-4S] cluster</name>
        <dbReference type="ChEBI" id="CHEBI:49883"/>
        <label>1</label>
    </ligand>
</feature>
<feature type="binding site" evidence="2">
    <location>
        <position position="17"/>
    </location>
    <ligand>
        <name>[4Fe-4S] cluster</name>
        <dbReference type="ChEBI" id="CHEBI:49883"/>
        <label>1</label>
    </ligand>
</feature>
<feature type="binding site" evidence="2">
    <location>
        <position position="21"/>
    </location>
    <ligand>
        <name>[4Fe-4S] cluster</name>
        <dbReference type="ChEBI" id="CHEBI:49883"/>
        <label>2</label>
    </ligand>
</feature>
<feature type="binding site" evidence="2">
    <location>
        <position position="48"/>
    </location>
    <ligand>
        <name>[4Fe-4S] cluster</name>
        <dbReference type="ChEBI" id="CHEBI:49883"/>
        <label>2</label>
    </ligand>
</feature>
<feature type="binding site" evidence="2">
    <location>
        <position position="51"/>
    </location>
    <ligand>
        <name>[4Fe-4S] cluster</name>
        <dbReference type="ChEBI" id="CHEBI:49883"/>
        <label>2</label>
    </ligand>
</feature>
<feature type="binding site" evidence="2">
    <location>
        <position position="54"/>
    </location>
    <ligand>
        <name>[4Fe-4S] cluster</name>
        <dbReference type="ChEBI" id="CHEBI:49883"/>
        <label>2</label>
    </ligand>
</feature>
<feature type="binding site" evidence="2">
    <location>
        <position position="58"/>
    </location>
    <ligand>
        <name>[4Fe-4S] cluster</name>
        <dbReference type="ChEBI" id="CHEBI:49883"/>
        <label>1</label>
    </ligand>
</feature>
<proteinExistence type="inferred from homology"/>
<accession>Q8M9U0</accession>
<protein>
    <recommendedName>
        <fullName evidence="2">Photosystem I iron-sulfur center</fullName>
        <ecNumber evidence="2">1.97.1.12</ecNumber>
    </recommendedName>
    <alternativeName>
        <fullName evidence="2">9 kDa polypeptide</fullName>
    </alternativeName>
    <alternativeName>
        <fullName evidence="2">PSI-C</fullName>
    </alternativeName>
    <alternativeName>
        <fullName evidence="2">Photosystem I subunit VII</fullName>
    </alternativeName>
    <alternativeName>
        <fullName evidence="2">PsaC</fullName>
    </alternativeName>
</protein>
<comment type="function">
    <text evidence="2">Apoprotein for the two 4Fe-4S centers FA and FB of photosystem I (PSI); essential for photochemical activity. FB is the terminal electron acceptor of PSI, donating electrons to ferredoxin. The C-terminus interacts with PsaA/B/D and helps assemble the protein into the PSI complex. Required for binding of PsaD and PsaE to PSI. PSI is a plastocyanin-ferredoxin oxidoreductase, converting photonic excitation into a charge separation, which transfers an electron from the donor P700 chlorophyll pair to the spectroscopically characterized acceptors A0, A1, FX, FA and FB in turn.</text>
</comment>
<comment type="catalytic activity">
    <reaction evidence="2">
        <text>reduced [plastocyanin] + hnu + oxidized [2Fe-2S]-[ferredoxin] = oxidized [plastocyanin] + reduced [2Fe-2S]-[ferredoxin]</text>
        <dbReference type="Rhea" id="RHEA:30407"/>
        <dbReference type="Rhea" id="RHEA-COMP:10000"/>
        <dbReference type="Rhea" id="RHEA-COMP:10001"/>
        <dbReference type="Rhea" id="RHEA-COMP:10039"/>
        <dbReference type="Rhea" id="RHEA-COMP:10040"/>
        <dbReference type="ChEBI" id="CHEBI:29036"/>
        <dbReference type="ChEBI" id="CHEBI:30212"/>
        <dbReference type="ChEBI" id="CHEBI:33737"/>
        <dbReference type="ChEBI" id="CHEBI:33738"/>
        <dbReference type="ChEBI" id="CHEBI:49552"/>
        <dbReference type="EC" id="1.97.1.12"/>
    </reaction>
</comment>
<comment type="cofactor">
    <cofactor evidence="2">
        <name>[4Fe-4S] cluster</name>
        <dbReference type="ChEBI" id="CHEBI:49883"/>
    </cofactor>
    <text evidence="2">Binds 2 [4Fe-4S] clusters. Cluster 2 is most probably the spectroscopically characterized electron acceptor FA and cluster 1 is most probably FB.</text>
</comment>
<comment type="subunit">
    <text evidence="2">The eukaryotic PSI reaction center is composed of at least 11 subunits.</text>
</comment>
<comment type="subcellular location">
    <subcellularLocation>
        <location evidence="2">Plastid</location>
        <location evidence="2">Chloroplast thylakoid membrane</location>
        <topology evidence="2">Peripheral membrane protein</topology>
        <orientation evidence="2">Stromal side</orientation>
    </subcellularLocation>
</comment>
<gene>
    <name evidence="2" type="primary">psaC</name>
</gene>
<dbReference type="EC" id="1.97.1.12" evidence="2"/>
<dbReference type="EMBL" id="AF494278">
    <property type="protein sequence ID" value="AAM96534.1"/>
    <property type="molecule type" value="Genomic_DNA"/>
</dbReference>
<dbReference type="RefSeq" id="NP_683853.1">
    <property type="nucleotide sequence ID" value="NC_004115.1"/>
</dbReference>
<dbReference type="SMR" id="Q8M9U0"/>
<dbReference type="GeneID" id="860690"/>
<dbReference type="GO" id="GO:0009535">
    <property type="term" value="C:chloroplast thylakoid membrane"/>
    <property type="evidence" value="ECO:0007669"/>
    <property type="project" value="UniProtKB-SubCell"/>
</dbReference>
<dbReference type="GO" id="GO:0009522">
    <property type="term" value="C:photosystem I"/>
    <property type="evidence" value="ECO:0007669"/>
    <property type="project" value="UniProtKB-KW"/>
</dbReference>
<dbReference type="GO" id="GO:0051539">
    <property type="term" value="F:4 iron, 4 sulfur cluster binding"/>
    <property type="evidence" value="ECO:0007669"/>
    <property type="project" value="UniProtKB-KW"/>
</dbReference>
<dbReference type="GO" id="GO:0009055">
    <property type="term" value="F:electron transfer activity"/>
    <property type="evidence" value="ECO:0007669"/>
    <property type="project" value="UniProtKB-UniRule"/>
</dbReference>
<dbReference type="GO" id="GO:0046872">
    <property type="term" value="F:metal ion binding"/>
    <property type="evidence" value="ECO:0007669"/>
    <property type="project" value="UniProtKB-KW"/>
</dbReference>
<dbReference type="GO" id="GO:0016491">
    <property type="term" value="F:oxidoreductase activity"/>
    <property type="evidence" value="ECO:0007669"/>
    <property type="project" value="UniProtKB-KW"/>
</dbReference>
<dbReference type="GO" id="GO:0009773">
    <property type="term" value="P:photosynthetic electron transport in photosystem I"/>
    <property type="evidence" value="ECO:0007669"/>
    <property type="project" value="InterPro"/>
</dbReference>
<dbReference type="FunFam" id="3.30.70.20:FF:000001">
    <property type="entry name" value="Photosystem I iron-sulfur center"/>
    <property type="match status" value="1"/>
</dbReference>
<dbReference type="Gene3D" id="3.30.70.20">
    <property type="match status" value="1"/>
</dbReference>
<dbReference type="HAMAP" id="MF_01303">
    <property type="entry name" value="PSI_PsaC"/>
    <property type="match status" value="1"/>
</dbReference>
<dbReference type="InterPro" id="IPR017896">
    <property type="entry name" value="4Fe4S_Fe-S-bd"/>
</dbReference>
<dbReference type="InterPro" id="IPR017900">
    <property type="entry name" value="4Fe4S_Fe_S_CS"/>
</dbReference>
<dbReference type="InterPro" id="IPR050157">
    <property type="entry name" value="PSI_iron-sulfur_center"/>
</dbReference>
<dbReference type="InterPro" id="IPR017491">
    <property type="entry name" value="PSI_PsaC"/>
</dbReference>
<dbReference type="NCBIfam" id="TIGR03048">
    <property type="entry name" value="PS_I_psaC"/>
    <property type="match status" value="1"/>
</dbReference>
<dbReference type="PANTHER" id="PTHR24960:SF79">
    <property type="entry name" value="PHOTOSYSTEM I IRON-SULFUR CENTER"/>
    <property type="match status" value="1"/>
</dbReference>
<dbReference type="PANTHER" id="PTHR24960">
    <property type="entry name" value="PHOTOSYSTEM I IRON-SULFUR CENTER-RELATED"/>
    <property type="match status" value="1"/>
</dbReference>
<dbReference type="Pfam" id="PF12838">
    <property type="entry name" value="Fer4_7"/>
    <property type="match status" value="1"/>
</dbReference>
<dbReference type="SUPFAM" id="SSF54862">
    <property type="entry name" value="4Fe-4S ferredoxins"/>
    <property type="match status" value="1"/>
</dbReference>
<dbReference type="PROSITE" id="PS00198">
    <property type="entry name" value="4FE4S_FER_1"/>
    <property type="match status" value="2"/>
</dbReference>
<dbReference type="PROSITE" id="PS51379">
    <property type="entry name" value="4FE4S_FER_2"/>
    <property type="match status" value="2"/>
</dbReference>
<keyword id="KW-0004">4Fe-4S</keyword>
<keyword id="KW-0150">Chloroplast</keyword>
<keyword id="KW-0249">Electron transport</keyword>
<keyword id="KW-0408">Iron</keyword>
<keyword id="KW-0411">Iron-sulfur</keyword>
<keyword id="KW-0472">Membrane</keyword>
<keyword id="KW-0479">Metal-binding</keyword>
<keyword id="KW-0560">Oxidoreductase</keyword>
<keyword id="KW-0602">Photosynthesis</keyword>
<keyword id="KW-0603">Photosystem I</keyword>
<keyword id="KW-0934">Plastid</keyword>
<keyword id="KW-0677">Repeat</keyword>
<keyword id="KW-0793">Thylakoid</keyword>
<keyword id="KW-0813">Transport</keyword>
<sequence length="81" mass="8875">MSHTVKIYDTCIGCTQCVRACPTDVLEMIPWDGCKANQIASSPRTEDCVGCKRCESACPTDFLSVRVYLGSETTRSMGLAY</sequence>
<organism>
    <name type="scientific">Chaetosphaeridium globosum</name>
    <name type="common">Charophycean green alga</name>
    <name type="synonym">Herposteiron globosum</name>
    <dbReference type="NCBI Taxonomy" id="96477"/>
    <lineage>
        <taxon>Eukaryota</taxon>
        <taxon>Viridiplantae</taxon>
        <taxon>Streptophyta</taxon>
        <taxon>Coleochaetophyceae</taxon>
        <taxon>Coleochaetales</taxon>
        <taxon>Chaetosphaeridiaceae</taxon>
        <taxon>Chaetosphaeridium</taxon>
    </lineage>
</organism>
<reference key="1">
    <citation type="journal article" date="2002" name="Proc. Natl. Acad. Sci. U.S.A.">
        <title>The chloroplast and mitochondrial genome sequences of the charophyte Chaetosphaeridium globosum: insights into the timing of the events that restructured organelle DNAs within the green algal lineage that led to land plants.</title>
        <authorList>
            <person name="Turmel M."/>
            <person name="Otis C."/>
            <person name="Lemieux C."/>
        </authorList>
    </citation>
    <scope>NUCLEOTIDE SEQUENCE [LARGE SCALE GENOMIC DNA]</scope>
    <source>
        <strain>M1311</strain>
    </source>
</reference>
<evidence type="ECO:0000250" key="1"/>
<evidence type="ECO:0000255" key="2">
    <source>
        <dbReference type="HAMAP-Rule" id="MF_01303"/>
    </source>
</evidence>